<feature type="chain" id="PRO_0000365304" description="tRNA (cytidine(56)-2'-O)-methyltransferase">
    <location>
        <begin position="1"/>
        <end position="180"/>
    </location>
</feature>
<feature type="binding site" evidence="1">
    <location>
        <position position="85"/>
    </location>
    <ligand>
        <name>S-adenosyl-L-methionine</name>
        <dbReference type="ChEBI" id="CHEBI:59789"/>
    </ligand>
</feature>
<organism>
    <name type="scientific">Methanobrevibacter smithii (strain ATCC 35061 / DSM 861 / OCM 144 / PS)</name>
    <dbReference type="NCBI Taxonomy" id="420247"/>
    <lineage>
        <taxon>Archaea</taxon>
        <taxon>Methanobacteriati</taxon>
        <taxon>Methanobacteriota</taxon>
        <taxon>Methanomada group</taxon>
        <taxon>Methanobacteria</taxon>
        <taxon>Methanobacteriales</taxon>
        <taxon>Methanobacteriaceae</taxon>
        <taxon>Methanobrevibacter</taxon>
    </lineage>
</organism>
<proteinExistence type="inferred from homology"/>
<reference key="1">
    <citation type="journal article" date="2007" name="Proc. Natl. Acad. Sci. U.S.A.">
        <title>Genomic and metabolic adaptations of Methanobrevibacter smithii to the human gut.</title>
        <authorList>
            <person name="Samuel B.S."/>
            <person name="Hansen E.E."/>
            <person name="Manchester J.K."/>
            <person name="Coutinho P.M."/>
            <person name="Henrissat B."/>
            <person name="Fulton R."/>
            <person name="Latreille P."/>
            <person name="Kim K."/>
            <person name="Wilson R.K."/>
            <person name="Gordon J.I."/>
        </authorList>
    </citation>
    <scope>NUCLEOTIDE SEQUENCE [LARGE SCALE GENOMIC DNA]</scope>
    <source>
        <strain>ATCC 35061 / DSM 861 / OCM 144 / PS</strain>
    </source>
</reference>
<dbReference type="EC" id="2.1.1.206" evidence="1"/>
<dbReference type="EMBL" id="CP000678">
    <property type="protein sequence ID" value="ABQ87137.1"/>
    <property type="molecule type" value="Genomic_DNA"/>
</dbReference>
<dbReference type="RefSeq" id="WP_011954183.1">
    <property type="nucleotide sequence ID" value="NZ_CP117965.1"/>
</dbReference>
<dbReference type="SMR" id="A5ULQ9"/>
<dbReference type="STRING" id="420247.Msm_0932"/>
<dbReference type="EnsemblBacteria" id="ABQ87137">
    <property type="protein sequence ID" value="ABQ87137"/>
    <property type="gene ID" value="Msm_0932"/>
</dbReference>
<dbReference type="KEGG" id="msi:Msm_0932"/>
<dbReference type="PATRIC" id="fig|420247.28.peg.928"/>
<dbReference type="eggNOG" id="arCOG01857">
    <property type="taxonomic scope" value="Archaea"/>
</dbReference>
<dbReference type="HOGENOM" id="CLU_123709_0_0_2"/>
<dbReference type="BioCyc" id="MSMI420247:GHWZ-957-MONOMER"/>
<dbReference type="Proteomes" id="UP000001992">
    <property type="component" value="Chromosome"/>
</dbReference>
<dbReference type="GO" id="GO:0005737">
    <property type="term" value="C:cytoplasm"/>
    <property type="evidence" value="ECO:0007669"/>
    <property type="project" value="UniProtKB-SubCell"/>
</dbReference>
<dbReference type="GO" id="GO:0106059">
    <property type="term" value="F:tRNA (cytidine(56)-2'-O)-methyltransferase activity"/>
    <property type="evidence" value="ECO:0007669"/>
    <property type="project" value="UniProtKB-EC"/>
</dbReference>
<dbReference type="GO" id="GO:0002128">
    <property type="term" value="P:tRNA nucleoside ribose methylation"/>
    <property type="evidence" value="ECO:0007669"/>
    <property type="project" value="UniProtKB-UniRule"/>
</dbReference>
<dbReference type="CDD" id="cd18083">
    <property type="entry name" value="aTrm56-like"/>
    <property type="match status" value="1"/>
</dbReference>
<dbReference type="Gene3D" id="3.40.1280.10">
    <property type="match status" value="1"/>
</dbReference>
<dbReference type="HAMAP" id="MF_00077">
    <property type="entry name" value="tRNA_methyltr_aTrm56"/>
    <property type="match status" value="1"/>
</dbReference>
<dbReference type="InterPro" id="IPR029028">
    <property type="entry name" value="Alpha/beta_knot_MTases"/>
</dbReference>
<dbReference type="InterPro" id="IPR029026">
    <property type="entry name" value="tRNA_m1G_MTases_N"/>
</dbReference>
<dbReference type="InterPro" id="IPR002845">
    <property type="entry name" value="tRNA_mtfrase_aTrm56"/>
</dbReference>
<dbReference type="PANTHER" id="PTHR42197">
    <property type="entry name" value="TRNA (CYTIDINE(56)-2'-O)-METHYLTRANSFERASE"/>
    <property type="match status" value="1"/>
</dbReference>
<dbReference type="PANTHER" id="PTHR42197:SF1">
    <property type="entry name" value="TRNA (CYTIDINE(56)-2'-O)-METHYLTRANSFERASE"/>
    <property type="match status" value="1"/>
</dbReference>
<dbReference type="Pfam" id="PF01994">
    <property type="entry name" value="Trm56"/>
    <property type="match status" value="1"/>
</dbReference>
<dbReference type="PIRSF" id="PIRSF016123">
    <property type="entry name" value="UCP016123"/>
    <property type="match status" value="1"/>
</dbReference>
<dbReference type="SUPFAM" id="SSF75217">
    <property type="entry name" value="alpha/beta knot"/>
    <property type="match status" value="1"/>
</dbReference>
<comment type="function">
    <text evidence="1">Specifically catalyzes the AdoMet-dependent 2'-O-ribose methylation of cytidine at position 56 in tRNAs.</text>
</comment>
<comment type="catalytic activity">
    <reaction evidence="1">
        <text>cytidine(56) in tRNA + S-adenosyl-L-methionine = 2'-O-methylcytidine(56) in tRNA + S-adenosyl-L-homocysteine + H(+)</text>
        <dbReference type="Rhea" id="RHEA:42968"/>
        <dbReference type="Rhea" id="RHEA-COMP:10308"/>
        <dbReference type="Rhea" id="RHEA-COMP:10309"/>
        <dbReference type="ChEBI" id="CHEBI:15378"/>
        <dbReference type="ChEBI" id="CHEBI:57856"/>
        <dbReference type="ChEBI" id="CHEBI:59789"/>
        <dbReference type="ChEBI" id="CHEBI:74495"/>
        <dbReference type="ChEBI" id="CHEBI:82748"/>
        <dbReference type="EC" id="2.1.1.206"/>
    </reaction>
</comment>
<comment type="subunit">
    <text evidence="1">Homodimer.</text>
</comment>
<comment type="subcellular location">
    <subcellularLocation>
        <location evidence="1">Cytoplasm</location>
    </subcellularLocation>
</comment>
<comment type="similarity">
    <text evidence="1">Belongs to the aTrm56 family.</text>
</comment>
<evidence type="ECO:0000255" key="1">
    <source>
        <dbReference type="HAMAP-Rule" id="MF_00077"/>
    </source>
</evidence>
<accession>A5ULQ9</accession>
<gene>
    <name type="ordered locus">Msm_0932</name>
</gene>
<keyword id="KW-0963">Cytoplasm</keyword>
<keyword id="KW-0489">Methyltransferase</keyword>
<keyword id="KW-0949">S-adenosyl-L-methionine</keyword>
<keyword id="KW-0808">Transferase</keyword>
<keyword id="KW-0819">tRNA processing</keyword>
<protein>
    <recommendedName>
        <fullName evidence="1">tRNA (cytidine(56)-2'-O)-methyltransferase</fullName>
        <ecNumber evidence="1">2.1.1.206</ecNumber>
    </recommendedName>
    <alternativeName>
        <fullName evidence="1">tRNA ribose 2'-O-methyltransferase aTrm56</fullName>
    </alternativeName>
</protein>
<name>TRM56_METS3</name>
<sequence length="180" mass="20226">MMNVNVLRLDHRIGRDTRITTHVCLTSRAFGASKIYLSGEEDHKLMENVRDTADRWGGNFEIEYAKNYMGVINKWKDNGGKVVHLTMYGSQAHEIVSEVQKSSADILIVVGGAKVPGKVYKSADWNVSVTTQPHSEVSSLAVFQHLLMDGKEFDLEFENPVFEVIPTAHGKNVNIHDENR</sequence>